<comment type="similarity">
    <text evidence="1">Belongs to the LarC family.</text>
</comment>
<name>Y1127_METTP</name>
<evidence type="ECO:0000255" key="1">
    <source>
        <dbReference type="HAMAP-Rule" id="MF_01074"/>
    </source>
</evidence>
<dbReference type="EMBL" id="CP000477">
    <property type="protein sequence ID" value="ABK14910.1"/>
    <property type="molecule type" value="Genomic_DNA"/>
</dbReference>
<dbReference type="RefSeq" id="WP_011696303.1">
    <property type="nucleotide sequence ID" value="NC_008553.1"/>
</dbReference>
<dbReference type="SMR" id="A0B886"/>
<dbReference type="STRING" id="349307.Mthe_1127"/>
<dbReference type="GeneID" id="4462878"/>
<dbReference type="KEGG" id="mtp:Mthe_1127"/>
<dbReference type="HOGENOM" id="CLU_028523_2_1_2"/>
<dbReference type="OrthoDB" id="10691at2157"/>
<dbReference type="Proteomes" id="UP000000674">
    <property type="component" value="Chromosome"/>
</dbReference>
<dbReference type="GO" id="GO:0016829">
    <property type="term" value="F:lyase activity"/>
    <property type="evidence" value="ECO:0007669"/>
    <property type="project" value="UniProtKB-UniRule"/>
</dbReference>
<dbReference type="GO" id="GO:0016151">
    <property type="term" value="F:nickel cation binding"/>
    <property type="evidence" value="ECO:0007669"/>
    <property type="project" value="UniProtKB-UniRule"/>
</dbReference>
<dbReference type="Gene3D" id="3.10.20.300">
    <property type="entry name" value="mk0293 like domain"/>
    <property type="match status" value="1"/>
</dbReference>
<dbReference type="Gene3D" id="3.30.70.1380">
    <property type="entry name" value="Transcriptional regulatory protein pf0864 domain like"/>
    <property type="match status" value="1"/>
</dbReference>
<dbReference type="HAMAP" id="MF_01074">
    <property type="entry name" value="LarC"/>
    <property type="match status" value="1"/>
</dbReference>
<dbReference type="InterPro" id="IPR002822">
    <property type="entry name" value="Ni_insertion"/>
</dbReference>
<dbReference type="NCBIfam" id="TIGR00299">
    <property type="entry name" value="nickel pincer cofactor biosynthesis protein LarC"/>
    <property type="match status" value="1"/>
</dbReference>
<dbReference type="PANTHER" id="PTHR36566">
    <property type="entry name" value="NICKEL INSERTION PROTEIN-RELATED"/>
    <property type="match status" value="1"/>
</dbReference>
<dbReference type="PANTHER" id="PTHR36566:SF1">
    <property type="entry name" value="PYRIDINIUM-3,5-BISTHIOCARBOXYLIC ACID MONONUCLEOTIDE NICKEL INSERTION PROTEIN"/>
    <property type="match status" value="1"/>
</dbReference>
<dbReference type="Pfam" id="PF01969">
    <property type="entry name" value="Ni_insertion"/>
    <property type="match status" value="1"/>
</dbReference>
<organism>
    <name type="scientific">Methanothrix thermoacetophila (strain DSM 6194 / JCM 14653 / NBRC 101360 / PT)</name>
    <name type="common">Methanosaeta thermophila</name>
    <dbReference type="NCBI Taxonomy" id="349307"/>
    <lineage>
        <taxon>Archaea</taxon>
        <taxon>Methanobacteriati</taxon>
        <taxon>Methanobacteriota</taxon>
        <taxon>Stenosarchaea group</taxon>
        <taxon>Methanomicrobia</taxon>
        <taxon>Methanotrichales</taxon>
        <taxon>Methanotrichaceae</taxon>
        <taxon>Methanothrix</taxon>
    </lineage>
</organism>
<feature type="chain" id="PRO_1000064653" description="Putative nickel insertion protein">
    <location>
        <begin position="1"/>
        <end position="392"/>
    </location>
</feature>
<reference key="1">
    <citation type="submission" date="2006-10" db="EMBL/GenBank/DDBJ databases">
        <title>Complete sequence of Methanosaeta thermophila PT.</title>
        <authorList>
            <consortium name="US DOE Joint Genome Institute"/>
            <person name="Copeland A."/>
            <person name="Lucas S."/>
            <person name="Lapidus A."/>
            <person name="Barry K."/>
            <person name="Detter J.C."/>
            <person name="Glavina del Rio T."/>
            <person name="Hammon N."/>
            <person name="Israni S."/>
            <person name="Pitluck S."/>
            <person name="Chain P."/>
            <person name="Malfatti S."/>
            <person name="Shin M."/>
            <person name="Vergez L."/>
            <person name="Schmutz J."/>
            <person name="Larimer F."/>
            <person name="Land M."/>
            <person name="Hauser L."/>
            <person name="Kyrpides N."/>
            <person name="Kim E."/>
            <person name="Smith K.S."/>
            <person name="Ingram-Smith C."/>
            <person name="Richardson P."/>
        </authorList>
    </citation>
    <scope>NUCLEOTIDE SEQUENCE [LARGE SCALE GENOMIC DNA]</scope>
    <source>
        <strain>DSM 6194 / JCM 14653 / NBRC 101360 / PT</strain>
    </source>
</reference>
<keyword id="KW-0533">Nickel</keyword>
<keyword id="KW-1185">Reference proteome</keyword>
<accession>A0B886</accession>
<sequence>MRALLFDPYCGASGDMILGALIDLGADLEYVRSAVESVGCRLEVNERRFDHIRAIRVKVISDKSFRSLGGAIDILKASALTSRALERALRILDIMASAESKVHGVDRENARFHEMGSLDALADIAGSCAAMESLDVKRILSIAPSVGGGITDTSHGMLPVPAPATLEILRSHRIPWRGGPVAHELLTPTGAAILAASVDTFLDHHPEIVTERVGYGAGSREIGMPNLLRAILGEIPHHMQHDRVVQIETNVDDVTGEILGSLIDMLMKEGALDVTVVPAVMKKGRSGSVISIISRENDARKLSAVLMRETGSLGVRVFPALHRLIAERRIESVEVMGRSVPVKIGSIGGEIISVKPEHDVCRRIAEELNIPVKDIIRIASEKGWRIAGRKID</sequence>
<gene>
    <name type="ordered locus">Mthe_1127</name>
</gene>
<proteinExistence type="inferred from homology"/>
<protein>
    <recommendedName>
        <fullName evidence="1">Putative nickel insertion protein</fullName>
    </recommendedName>
</protein>